<reference key="1">
    <citation type="journal article" date="2009" name="Proc. Natl. Acad. Sci. U.S.A.">
        <title>Biogeography of the Sulfolobus islandicus pan-genome.</title>
        <authorList>
            <person name="Reno M.L."/>
            <person name="Held N.L."/>
            <person name="Fields C.J."/>
            <person name="Burke P.V."/>
            <person name="Whitaker R.J."/>
        </authorList>
    </citation>
    <scope>NUCLEOTIDE SEQUENCE [LARGE SCALE GENOMIC DNA]</scope>
    <source>
        <strain>Y.N.15.51 / Yellowstone #2</strain>
    </source>
</reference>
<feature type="chain" id="PRO_1000204225" description="Translation initiation factor 1A">
    <location>
        <begin position="1"/>
        <end position="108"/>
    </location>
</feature>
<feature type="domain" description="S1-like" evidence="1">
    <location>
        <begin position="11"/>
        <end position="85"/>
    </location>
</feature>
<keyword id="KW-0396">Initiation factor</keyword>
<keyword id="KW-0648">Protein biosynthesis</keyword>
<name>IF1A_SACI1</name>
<gene>
    <name type="primary">eIF1A</name>
    <name type="ordered locus">YN1551_2778</name>
</gene>
<dbReference type="EMBL" id="CP001404">
    <property type="protein sequence ID" value="ACP49682.1"/>
    <property type="molecule type" value="Genomic_DNA"/>
</dbReference>
<dbReference type="RefSeq" id="WP_012710350.1">
    <property type="nucleotide sequence ID" value="NC_012623.1"/>
</dbReference>
<dbReference type="SMR" id="C3NMA0"/>
<dbReference type="KEGG" id="sin:YN1551_2778"/>
<dbReference type="HOGENOM" id="CLU_109098_1_2_2"/>
<dbReference type="Proteomes" id="UP000006818">
    <property type="component" value="Chromosome"/>
</dbReference>
<dbReference type="GO" id="GO:0003723">
    <property type="term" value="F:RNA binding"/>
    <property type="evidence" value="ECO:0007669"/>
    <property type="project" value="InterPro"/>
</dbReference>
<dbReference type="GO" id="GO:0003743">
    <property type="term" value="F:translation initiation factor activity"/>
    <property type="evidence" value="ECO:0007669"/>
    <property type="project" value="UniProtKB-UniRule"/>
</dbReference>
<dbReference type="CDD" id="cd05793">
    <property type="entry name" value="S1_IF1A"/>
    <property type="match status" value="1"/>
</dbReference>
<dbReference type="Gene3D" id="2.40.50.140">
    <property type="entry name" value="Nucleic acid-binding proteins"/>
    <property type="match status" value="1"/>
</dbReference>
<dbReference type="HAMAP" id="MF_00216">
    <property type="entry name" value="aIF_1A"/>
    <property type="match status" value="1"/>
</dbReference>
<dbReference type="InterPro" id="IPR012340">
    <property type="entry name" value="NA-bd_OB-fold"/>
</dbReference>
<dbReference type="InterPro" id="IPR006196">
    <property type="entry name" value="RNA-binding_domain_S1_IF1"/>
</dbReference>
<dbReference type="InterPro" id="IPR001253">
    <property type="entry name" value="TIF_eIF-1A"/>
</dbReference>
<dbReference type="InterPro" id="IPR018104">
    <property type="entry name" value="TIF_eIF-1A_CS"/>
</dbReference>
<dbReference type="NCBIfam" id="TIGR00523">
    <property type="entry name" value="eIF-1A"/>
    <property type="match status" value="1"/>
</dbReference>
<dbReference type="NCBIfam" id="NF003082">
    <property type="entry name" value="PRK04012.1-1"/>
    <property type="match status" value="1"/>
</dbReference>
<dbReference type="NCBIfam" id="NF003084">
    <property type="entry name" value="PRK04012.1-3"/>
    <property type="match status" value="1"/>
</dbReference>
<dbReference type="NCBIfam" id="NF003085">
    <property type="entry name" value="PRK04012.1-5"/>
    <property type="match status" value="1"/>
</dbReference>
<dbReference type="PANTHER" id="PTHR21668">
    <property type="entry name" value="EIF-1A"/>
    <property type="match status" value="1"/>
</dbReference>
<dbReference type="Pfam" id="PF01176">
    <property type="entry name" value="eIF-1a"/>
    <property type="match status" value="1"/>
</dbReference>
<dbReference type="SMART" id="SM00652">
    <property type="entry name" value="eIF1a"/>
    <property type="match status" value="1"/>
</dbReference>
<dbReference type="SUPFAM" id="SSF50249">
    <property type="entry name" value="Nucleic acid-binding proteins"/>
    <property type="match status" value="1"/>
</dbReference>
<dbReference type="PROSITE" id="PS01262">
    <property type="entry name" value="IF1A"/>
    <property type="match status" value="1"/>
</dbReference>
<dbReference type="PROSITE" id="PS50832">
    <property type="entry name" value="S1_IF1_TYPE"/>
    <property type="match status" value="1"/>
</dbReference>
<sequence length="108" mass="12476">MPKKDRAQEAPSRDVPKPEEGQTICVVKKMLGGDHLVVLCMDGKERLARIPGKIRKKMWMREGDVVLVGIWDFQPNRCDILYKYGNDEIKRLVNENIISREVIDQLRG</sequence>
<proteinExistence type="inferred from homology"/>
<protein>
    <recommendedName>
        <fullName evidence="1">Translation initiation factor 1A</fullName>
        <shortName evidence="1">aIF-1A</shortName>
    </recommendedName>
</protein>
<evidence type="ECO:0000255" key="1">
    <source>
        <dbReference type="HAMAP-Rule" id="MF_00216"/>
    </source>
</evidence>
<organism>
    <name type="scientific">Saccharolobus islandicus (strain Y.N.15.51 / Yellowstone #2)</name>
    <name type="common">Sulfolobus islandicus</name>
    <dbReference type="NCBI Taxonomy" id="419942"/>
    <lineage>
        <taxon>Archaea</taxon>
        <taxon>Thermoproteota</taxon>
        <taxon>Thermoprotei</taxon>
        <taxon>Sulfolobales</taxon>
        <taxon>Sulfolobaceae</taxon>
        <taxon>Saccharolobus</taxon>
    </lineage>
</organism>
<accession>C3NMA0</accession>
<comment type="function">
    <text evidence="1">Seems to be required for maximal rate of protein biosynthesis. Enhances ribosome dissociation into subunits and stabilizes the binding of the initiator Met-tRNA(I) to 40 S ribosomal subunits.</text>
</comment>
<comment type="similarity">
    <text evidence="1">Belongs to the eIF-1A family.</text>
</comment>